<dbReference type="EMBL" id="AY860964">
    <property type="protein sequence ID" value="AAX56299.1"/>
    <property type="molecule type" value="mRNA"/>
</dbReference>
<dbReference type="EMBL" id="AK016476">
    <property type="status" value="NOT_ANNOTATED_CDS"/>
    <property type="molecule type" value="mRNA"/>
</dbReference>
<dbReference type="EMBL" id="AK046964">
    <property type="protein sequence ID" value="BAC32928.1"/>
    <property type="molecule type" value="mRNA"/>
</dbReference>
<dbReference type="EMBL" id="AK047675">
    <property type="protein sequence ID" value="BAC33121.1"/>
    <property type="molecule type" value="mRNA"/>
</dbReference>
<dbReference type="EMBL" id="AL831736">
    <property type="status" value="NOT_ANNOTATED_CDS"/>
    <property type="molecule type" value="Genomic_DNA"/>
</dbReference>
<dbReference type="EMBL" id="BC006046">
    <property type="protein sequence ID" value="AAH06046.1"/>
    <property type="molecule type" value="mRNA"/>
</dbReference>
<dbReference type="CCDS" id="CCDS38245.1"/>
<dbReference type="RefSeq" id="NP_081917.1">
    <property type="nucleotide sequence ID" value="NM_027641.2"/>
</dbReference>
<dbReference type="SMR" id="Q99JL1"/>
<dbReference type="FunCoup" id="Q99JL1">
    <property type="interactions" value="147"/>
</dbReference>
<dbReference type="STRING" id="10090.ENSMUSP00000105847"/>
<dbReference type="iPTMnet" id="Q99JL1"/>
<dbReference type="PhosphoSitePlus" id="Q99JL1"/>
<dbReference type="PaxDb" id="10090-ENSMUSP00000105847"/>
<dbReference type="ProteomicsDB" id="261569"/>
<dbReference type="Antibodypedia" id="62787">
    <property type="antibodies" value="16 antibodies from 10 providers"/>
</dbReference>
<dbReference type="DNASU" id="70997"/>
<dbReference type="Ensembl" id="ENSMUST00000028801.8">
    <property type="protein sequence ID" value="ENSMUSP00000028801.2"/>
    <property type="gene ID" value="ENSMUSG00000027329.10"/>
</dbReference>
<dbReference type="Ensembl" id="ENSMUST00000110218.9">
    <property type="protein sequence ID" value="ENSMUSP00000105847.3"/>
    <property type="gene ID" value="ENSMUSG00000027329.10"/>
</dbReference>
<dbReference type="GeneID" id="70997"/>
<dbReference type="KEGG" id="mmu:70997"/>
<dbReference type="UCSC" id="uc008mkv.1">
    <property type="organism name" value="mouse"/>
</dbReference>
<dbReference type="AGR" id="MGI:3513546"/>
<dbReference type="CTD" id="25876"/>
<dbReference type="MGI" id="MGI:3513546">
    <property type="gene designation" value="Spef1"/>
</dbReference>
<dbReference type="VEuPathDB" id="HostDB:ENSMUSG00000027329"/>
<dbReference type="eggNOG" id="ENOG502S497">
    <property type="taxonomic scope" value="Eukaryota"/>
</dbReference>
<dbReference type="GeneTree" id="ENSGT00910000144159"/>
<dbReference type="HOGENOM" id="CLU_069635_0_0_1"/>
<dbReference type="InParanoid" id="Q99JL1"/>
<dbReference type="OMA" id="KLDNWNT"/>
<dbReference type="OrthoDB" id="193300at2759"/>
<dbReference type="PhylomeDB" id="Q99JL1"/>
<dbReference type="TreeFam" id="TF323506"/>
<dbReference type="BioGRID-ORCS" id="70997">
    <property type="hits" value="2 hits in 78 CRISPR screens"/>
</dbReference>
<dbReference type="PRO" id="PR:Q99JL1"/>
<dbReference type="Proteomes" id="UP000000589">
    <property type="component" value="Chromosome 2"/>
</dbReference>
<dbReference type="RNAct" id="Q99JL1">
    <property type="molecule type" value="protein"/>
</dbReference>
<dbReference type="Bgee" id="ENSMUSG00000027329">
    <property type="expression patterns" value="Expressed in ileal epithelium and 157 other cell types or tissues"/>
</dbReference>
<dbReference type="ExpressionAtlas" id="Q99JL1">
    <property type="expression patterns" value="baseline and differential"/>
</dbReference>
<dbReference type="GO" id="GO:0097729">
    <property type="term" value="C:9+2 motile cilium"/>
    <property type="evidence" value="ECO:0000314"/>
    <property type="project" value="UniProtKB"/>
</dbReference>
<dbReference type="GO" id="GO:0016324">
    <property type="term" value="C:apical plasma membrane"/>
    <property type="evidence" value="ECO:0000250"/>
    <property type="project" value="UniProtKB"/>
</dbReference>
<dbReference type="GO" id="GO:1990716">
    <property type="term" value="C:axonemal central apparatus"/>
    <property type="evidence" value="ECO:0000314"/>
    <property type="project" value="UniProtKB"/>
</dbReference>
<dbReference type="GO" id="GO:0005930">
    <property type="term" value="C:axoneme"/>
    <property type="evidence" value="ECO:0000250"/>
    <property type="project" value="UniProtKB"/>
</dbReference>
<dbReference type="GO" id="GO:0016323">
    <property type="term" value="C:basolateral plasma membrane"/>
    <property type="evidence" value="ECO:0000250"/>
    <property type="project" value="UniProtKB"/>
</dbReference>
<dbReference type="GO" id="GO:0097542">
    <property type="term" value="C:ciliary tip"/>
    <property type="evidence" value="ECO:0000314"/>
    <property type="project" value="UniProtKB"/>
</dbReference>
<dbReference type="GO" id="GO:0005737">
    <property type="term" value="C:cytoplasm"/>
    <property type="evidence" value="ECO:0000314"/>
    <property type="project" value="MGI"/>
</dbReference>
<dbReference type="GO" id="GO:0030175">
    <property type="term" value="C:filopodium"/>
    <property type="evidence" value="ECO:0000250"/>
    <property type="project" value="UniProtKB"/>
</dbReference>
<dbReference type="GO" id="GO:0030027">
    <property type="term" value="C:lamellipodium"/>
    <property type="evidence" value="ECO:0000250"/>
    <property type="project" value="UniProtKB"/>
</dbReference>
<dbReference type="GO" id="GO:0005874">
    <property type="term" value="C:microtubule"/>
    <property type="evidence" value="ECO:0000250"/>
    <property type="project" value="UniProtKB"/>
</dbReference>
<dbReference type="GO" id="GO:0005902">
    <property type="term" value="C:microvillus"/>
    <property type="evidence" value="ECO:0000250"/>
    <property type="project" value="UniProtKB"/>
</dbReference>
<dbReference type="GO" id="GO:0031514">
    <property type="term" value="C:motile cilium"/>
    <property type="evidence" value="ECO:0000314"/>
    <property type="project" value="MGI"/>
</dbReference>
<dbReference type="GO" id="GO:0001725">
    <property type="term" value="C:stress fiber"/>
    <property type="evidence" value="ECO:0007669"/>
    <property type="project" value="UniProtKB-SubCell"/>
</dbReference>
<dbReference type="GO" id="GO:0003779">
    <property type="term" value="F:actin binding"/>
    <property type="evidence" value="ECO:0007669"/>
    <property type="project" value="UniProtKB-KW"/>
</dbReference>
<dbReference type="GO" id="GO:0008017">
    <property type="term" value="F:microtubule binding"/>
    <property type="evidence" value="ECO:0000314"/>
    <property type="project" value="UniProtKB"/>
</dbReference>
<dbReference type="GO" id="GO:1904158">
    <property type="term" value="P:axonemal central apparatus assembly"/>
    <property type="evidence" value="ECO:0000315"/>
    <property type="project" value="UniProtKB"/>
</dbReference>
<dbReference type="GO" id="GO:0016477">
    <property type="term" value="P:cell migration"/>
    <property type="evidence" value="ECO:0000250"/>
    <property type="project" value="UniProtKB"/>
</dbReference>
<dbReference type="GO" id="GO:0003341">
    <property type="term" value="P:cilium movement"/>
    <property type="evidence" value="ECO:0000315"/>
    <property type="project" value="UniProtKB"/>
</dbReference>
<dbReference type="GO" id="GO:0046847">
    <property type="term" value="P:filopodium assembly"/>
    <property type="evidence" value="ECO:0000250"/>
    <property type="project" value="UniProtKB"/>
</dbReference>
<dbReference type="GO" id="GO:0030032">
    <property type="term" value="P:lamellipodium assembly"/>
    <property type="evidence" value="ECO:0000250"/>
    <property type="project" value="UniProtKB"/>
</dbReference>
<dbReference type="GO" id="GO:0001578">
    <property type="term" value="P:microtubule bundle formation"/>
    <property type="evidence" value="ECO:0000314"/>
    <property type="project" value="UniProtKB"/>
</dbReference>
<dbReference type="GO" id="GO:0007026">
    <property type="term" value="P:negative regulation of microtubule depolymerization"/>
    <property type="evidence" value="ECO:0000314"/>
    <property type="project" value="UniProtKB"/>
</dbReference>
<dbReference type="GO" id="GO:2000095">
    <property type="term" value="P:regulation of Wnt signaling pathway, planar cell polarity pathway"/>
    <property type="evidence" value="ECO:0000250"/>
    <property type="project" value="UniProtKB"/>
</dbReference>
<dbReference type="FunFam" id="1.10.418.10:FF:000060">
    <property type="entry name" value="Sperm flagellar protein 1"/>
    <property type="match status" value="1"/>
</dbReference>
<dbReference type="Gene3D" id="1.10.418.10">
    <property type="entry name" value="Calponin-like domain"/>
    <property type="match status" value="1"/>
</dbReference>
<dbReference type="InterPro" id="IPR010441">
    <property type="entry name" value="CH_2"/>
</dbReference>
<dbReference type="InterPro" id="IPR001715">
    <property type="entry name" value="CH_dom"/>
</dbReference>
<dbReference type="InterPro" id="IPR036872">
    <property type="entry name" value="CH_dom_sf"/>
</dbReference>
<dbReference type="InterPro" id="IPR052111">
    <property type="entry name" value="Spermatogenesis_Ciliary_MAP"/>
</dbReference>
<dbReference type="PANTHER" id="PTHR12509:SF16">
    <property type="entry name" value="SPERM FLAGELLAR PROTEIN 1"/>
    <property type="match status" value="1"/>
</dbReference>
<dbReference type="PANTHER" id="PTHR12509">
    <property type="entry name" value="SPERMATOGENESIS-ASSOCIATED 4-RELATED"/>
    <property type="match status" value="1"/>
</dbReference>
<dbReference type="Pfam" id="PF06294">
    <property type="entry name" value="CH_2"/>
    <property type="match status" value="1"/>
</dbReference>
<dbReference type="SUPFAM" id="SSF47576">
    <property type="entry name" value="Calponin-homology domain, CH-domain"/>
    <property type="match status" value="1"/>
</dbReference>
<dbReference type="PROSITE" id="PS50021">
    <property type="entry name" value="CH"/>
    <property type="match status" value="1"/>
</dbReference>
<protein>
    <recommendedName>
        <fullName>Sperm flagellar protein 1</fullName>
    </recommendedName>
    <alternativeName>
        <fullName evidence="7">Calponin-homology and microtubule-associated protein</fullName>
    </alternativeName>
</protein>
<sequence>MESSVDEEALHQLYLWVDNIPLSRPKRNLSRDFSDGVLVAELIKFYFPKMVEMHNYVPANSLQQKLSNWGHLNRKVLNKLNFSVPDDVMRKIAQCSPGVVELVLIPLRQRLEERQRRQKLGVGSLQELAPQDSSGYMDMGLPQKVRGEGAPALGEQLREGRPLASRPPGYNQALQGDPSFVLQIAEKEQELLASQETVQVLQMKVKRLEHLLQLKNVRIDDLSRRLQQAERKQR</sequence>
<name>SPEF1_MOUSE</name>
<gene>
    <name type="primary">Spef1</name>
    <name evidence="7" type="synonym">Clamp</name>
</gene>
<reference key="1">
    <citation type="journal article" date="2005" name="Gene">
        <title>Spef1, a conserved novel testis protein found in mouse sperm flagella.</title>
        <authorList>
            <person name="Chan S.W."/>
            <person name="Fowler K.J."/>
            <person name="Choo K.H.A."/>
            <person name="Kalitsis P."/>
        </authorList>
    </citation>
    <scope>NUCLEOTIDE SEQUENCE [MRNA]</scope>
    <scope>SUBCELLULAR LOCATION</scope>
    <scope>TISSUE SPECIFICITY</scope>
    <scope>DEVELOPMENTAL STAGE</scope>
    <source>
        <strain>CD-1</strain>
        <tissue>Testis</tissue>
    </source>
</reference>
<reference key="2">
    <citation type="journal article" date="2005" name="Science">
        <title>The transcriptional landscape of the mammalian genome.</title>
        <authorList>
            <person name="Carninci P."/>
            <person name="Kasukawa T."/>
            <person name="Katayama S."/>
            <person name="Gough J."/>
            <person name="Frith M.C."/>
            <person name="Maeda N."/>
            <person name="Oyama R."/>
            <person name="Ravasi T."/>
            <person name="Lenhard B."/>
            <person name="Wells C."/>
            <person name="Kodzius R."/>
            <person name="Shimokawa K."/>
            <person name="Bajic V.B."/>
            <person name="Brenner S.E."/>
            <person name="Batalov S."/>
            <person name="Forrest A.R."/>
            <person name="Zavolan M."/>
            <person name="Davis M.J."/>
            <person name="Wilming L.G."/>
            <person name="Aidinis V."/>
            <person name="Allen J.E."/>
            <person name="Ambesi-Impiombato A."/>
            <person name="Apweiler R."/>
            <person name="Aturaliya R.N."/>
            <person name="Bailey T.L."/>
            <person name="Bansal M."/>
            <person name="Baxter L."/>
            <person name="Beisel K.W."/>
            <person name="Bersano T."/>
            <person name="Bono H."/>
            <person name="Chalk A.M."/>
            <person name="Chiu K.P."/>
            <person name="Choudhary V."/>
            <person name="Christoffels A."/>
            <person name="Clutterbuck D.R."/>
            <person name="Crowe M.L."/>
            <person name="Dalla E."/>
            <person name="Dalrymple B.P."/>
            <person name="de Bono B."/>
            <person name="Della Gatta G."/>
            <person name="di Bernardo D."/>
            <person name="Down T."/>
            <person name="Engstrom P."/>
            <person name="Fagiolini M."/>
            <person name="Faulkner G."/>
            <person name="Fletcher C.F."/>
            <person name="Fukushima T."/>
            <person name="Furuno M."/>
            <person name="Futaki S."/>
            <person name="Gariboldi M."/>
            <person name="Georgii-Hemming P."/>
            <person name="Gingeras T.R."/>
            <person name="Gojobori T."/>
            <person name="Green R.E."/>
            <person name="Gustincich S."/>
            <person name="Harbers M."/>
            <person name="Hayashi Y."/>
            <person name="Hensch T.K."/>
            <person name="Hirokawa N."/>
            <person name="Hill D."/>
            <person name="Huminiecki L."/>
            <person name="Iacono M."/>
            <person name="Ikeo K."/>
            <person name="Iwama A."/>
            <person name="Ishikawa T."/>
            <person name="Jakt M."/>
            <person name="Kanapin A."/>
            <person name="Katoh M."/>
            <person name="Kawasawa Y."/>
            <person name="Kelso J."/>
            <person name="Kitamura H."/>
            <person name="Kitano H."/>
            <person name="Kollias G."/>
            <person name="Krishnan S.P."/>
            <person name="Kruger A."/>
            <person name="Kummerfeld S.K."/>
            <person name="Kurochkin I.V."/>
            <person name="Lareau L.F."/>
            <person name="Lazarevic D."/>
            <person name="Lipovich L."/>
            <person name="Liu J."/>
            <person name="Liuni S."/>
            <person name="McWilliam S."/>
            <person name="Madan Babu M."/>
            <person name="Madera M."/>
            <person name="Marchionni L."/>
            <person name="Matsuda H."/>
            <person name="Matsuzawa S."/>
            <person name="Miki H."/>
            <person name="Mignone F."/>
            <person name="Miyake S."/>
            <person name="Morris K."/>
            <person name="Mottagui-Tabar S."/>
            <person name="Mulder N."/>
            <person name="Nakano N."/>
            <person name="Nakauchi H."/>
            <person name="Ng P."/>
            <person name="Nilsson R."/>
            <person name="Nishiguchi S."/>
            <person name="Nishikawa S."/>
            <person name="Nori F."/>
            <person name="Ohara O."/>
            <person name="Okazaki Y."/>
            <person name="Orlando V."/>
            <person name="Pang K.C."/>
            <person name="Pavan W.J."/>
            <person name="Pavesi G."/>
            <person name="Pesole G."/>
            <person name="Petrovsky N."/>
            <person name="Piazza S."/>
            <person name="Reed J."/>
            <person name="Reid J.F."/>
            <person name="Ring B.Z."/>
            <person name="Ringwald M."/>
            <person name="Rost B."/>
            <person name="Ruan Y."/>
            <person name="Salzberg S.L."/>
            <person name="Sandelin A."/>
            <person name="Schneider C."/>
            <person name="Schoenbach C."/>
            <person name="Sekiguchi K."/>
            <person name="Semple C.A."/>
            <person name="Seno S."/>
            <person name="Sessa L."/>
            <person name="Sheng Y."/>
            <person name="Shibata Y."/>
            <person name="Shimada H."/>
            <person name="Shimada K."/>
            <person name="Silva D."/>
            <person name="Sinclair B."/>
            <person name="Sperling S."/>
            <person name="Stupka E."/>
            <person name="Sugiura K."/>
            <person name="Sultana R."/>
            <person name="Takenaka Y."/>
            <person name="Taki K."/>
            <person name="Tammoja K."/>
            <person name="Tan S.L."/>
            <person name="Tang S."/>
            <person name="Taylor M.S."/>
            <person name="Tegner J."/>
            <person name="Teichmann S.A."/>
            <person name="Ueda H.R."/>
            <person name="van Nimwegen E."/>
            <person name="Verardo R."/>
            <person name="Wei C.L."/>
            <person name="Yagi K."/>
            <person name="Yamanishi H."/>
            <person name="Zabarovsky E."/>
            <person name="Zhu S."/>
            <person name="Zimmer A."/>
            <person name="Hide W."/>
            <person name="Bult C."/>
            <person name="Grimmond S.M."/>
            <person name="Teasdale R.D."/>
            <person name="Liu E.T."/>
            <person name="Brusic V."/>
            <person name="Quackenbush J."/>
            <person name="Wahlestedt C."/>
            <person name="Mattick J.S."/>
            <person name="Hume D.A."/>
            <person name="Kai C."/>
            <person name="Sasaki D."/>
            <person name="Tomaru Y."/>
            <person name="Fukuda S."/>
            <person name="Kanamori-Katayama M."/>
            <person name="Suzuki M."/>
            <person name="Aoki J."/>
            <person name="Arakawa T."/>
            <person name="Iida J."/>
            <person name="Imamura K."/>
            <person name="Itoh M."/>
            <person name="Kato T."/>
            <person name="Kawaji H."/>
            <person name="Kawagashira N."/>
            <person name="Kawashima T."/>
            <person name="Kojima M."/>
            <person name="Kondo S."/>
            <person name="Konno H."/>
            <person name="Nakano K."/>
            <person name="Ninomiya N."/>
            <person name="Nishio T."/>
            <person name="Okada M."/>
            <person name="Plessy C."/>
            <person name="Shibata K."/>
            <person name="Shiraki T."/>
            <person name="Suzuki S."/>
            <person name="Tagami M."/>
            <person name="Waki K."/>
            <person name="Watahiki A."/>
            <person name="Okamura-Oho Y."/>
            <person name="Suzuki H."/>
            <person name="Kawai J."/>
            <person name="Hayashizaki Y."/>
        </authorList>
    </citation>
    <scope>NUCLEOTIDE SEQUENCE [LARGE SCALE MRNA]</scope>
    <source>
        <strain>C57BL/6J</strain>
        <tissue>Cerebellum</tissue>
        <tissue>Corpus striatum</tissue>
        <tissue>Testis</tissue>
    </source>
</reference>
<reference key="3">
    <citation type="journal article" date="2009" name="PLoS Biol.">
        <title>Lineage-specific biology revealed by a finished genome assembly of the mouse.</title>
        <authorList>
            <person name="Church D.M."/>
            <person name="Goodstadt L."/>
            <person name="Hillier L.W."/>
            <person name="Zody M.C."/>
            <person name="Goldstein S."/>
            <person name="She X."/>
            <person name="Bult C.J."/>
            <person name="Agarwala R."/>
            <person name="Cherry J.L."/>
            <person name="DiCuccio M."/>
            <person name="Hlavina W."/>
            <person name="Kapustin Y."/>
            <person name="Meric P."/>
            <person name="Maglott D."/>
            <person name="Birtle Z."/>
            <person name="Marques A.C."/>
            <person name="Graves T."/>
            <person name="Zhou S."/>
            <person name="Teague B."/>
            <person name="Potamousis K."/>
            <person name="Churas C."/>
            <person name="Place M."/>
            <person name="Herschleb J."/>
            <person name="Runnheim R."/>
            <person name="Forrest D."/>
            <person name="Amos-Landgraf J."/>
            <person name="Schwartz D.C."/>
            <person name="Cheng Z."/>
            <person name="Lindblad-Toh K."/>
            <person name="Eichler E.E."/>
            <person name="Ponting C.P."/>
        </authorList>
    </citation>
    <scope>NUCLEOTIDE SEQUENCE [LARGE SCALE GENOMIC DNA]</scope>
    <source>
        <strain>C57BL/6J</strain>
    </source>
</reference>
<reference key="4">
    <citation type="journal article" date="2004" name="Genome Res.">
        <title>The status, quality, and expansion of the NIH full-length cDNA project: the Mammalian Gene Collection (MGC).</title>
        <authorList>
            <consortium name="The MGC Project Team"/>
        </authorList>
    </citation>
    <scope>NUCLEOTIDE SEQUENCE [LARGE SCALE MRNA]</scope>
    <source>
        <strain>Czech II</strain>
        <tissue>Mammary gland</tissue>
    </source>
</reference>
<reference key="5">
    <citation type="journal article" date="2005" name="Cell Motil. Cytoskeleton">
        <title>CLAMP, a novel microtubule-associated protein with EB-type calponin homology.</title>
        <authorList>
            <person name="Dougherty G.W."/>
            <person name="Adler H.J."/>
            <person name="Rzadzinska A."/>
            <person name="Gimona M."/>
            <person name="Tomita Y."/>
            <person name="Lattig M.C."/>
            <person name="Merritt R.C. Jr."/>
            <person name="Kachar B."/>
        </authorList>
    </citation>
    <scope>FUNCTION</scope>
    <scope>TISSUE SPECIFICITY</scope>
</reference>
<reference key="6">
    <citation type="journal article" date="2019" name="J. Mol. Cell Biol.">
        <title>Microtubule-bundling protein Spef1 enables mammalian ciliary central apparatus formation.</title>
        <authorList>
            <person name="Zheng J."/>
            <person name="Liu H."/>
            <person name="Zhu L."/>
            <person name="Chen Y."/>
            <person name="Zhao H."/>
            <person name="Zhang W."/>
            <person name="Li F."/>
            <person name="Xie L."/>
            <person name="Yan X."/>
            <person name="Zhu X."/>
        </authorList>
    </citation>
    <scope>FUNCTION</scope>
    <scope>SUBUNIT</scope>
    <scope>SUBCELLULAR LOCATION</scope>
    <scope>TISSUE SPECIFICITY</scope>
    <scope>MUTAGENESIS OF ARG-31</scope>
    <scope>DISRUPTION PHENOTYPE</scope>
    <scope>DOMAIN CALPONIN-HOMOLOGY</scope>
</reference>
<organism>
    <name type="scientific">Mus musculus</name>
    <name type="common">Mouse</name>
    <dbReference type="NCBI Taxonomy" id="10090"/>
    <lineage>
        <taxon>Eukaryota</taxon>
        <taxon>Metazoa</taxon>
        <taxon>Chordata</taxon>
        <taxon>Craniata</taxon>
        <taxon>Vertebrata</taxon>
        <taxon>Euteleostomi</taxon>
        <taxon>Mammalia</taxon>
        <taxon>Eutheria</taxon>
        <taxon>Euarchontoglires</taxon>
        <taxon>Glires</taxon>
        <taxon>Rodentia</taxon>
        <taxon>Myomorpha</taxon>
        <taxon>Muroidea</taxon>
        <taxon>Muridae</taxon>
        <taxon>Murinae</taxon>
        <taxon>Mus</taxon>
        <taxon>Mus</taxon>
    </lineage>
</organism>
<feature type="chain" id="PRO_0000079422" description="Sperm flagellar protein 1">
    <location>
        <begin position="1"/>
        <end position="234"/>
    </location>
</feature>
<feature type="domain" description="Calponin-homology (CH)" evidence="3">
    <location>
        <begin position="7"/>
        <end position="112"/>
    </location>
</feature>
<feature type="region of interest" description="Essential for homodimerization and microtubule bundling activity" evidence="6">
    <location>
        <begin position="181"/>
        <end position="234"/>
    </location>
</feature>
<feature type="mutagenesis site" description="Disruption of its microtubule-binding and microtubule bundling activities. Failure to rescue ciliary central apparatus formation in SPEF1-depleted ependymal cilia." evidence="6">
    <original>R</original>
    <variation>A</variation>
    <location>
        <position position="31"/>
    </location>
</feature>
<feature type="sequence conflict" description="In Ref. 2; AK016476." evidence="8" ref="2">
    <original>L</original>
    <variation>P</variation>
    <location>
        <position position="111"/>
    </location>
</feature>
<feature type="sequence conflict" description="In Ref. 2; AK016476." evidence="8" ref="2">
    <original>P</original>
    <variation>L</variation>
    <location>
        <position position="167"/>
    </location>
</feature>
<feature type="sequence conflict" description="In Ref. 2; AK016476." evidence="8" ref="2">
    <original>KEQELLASQETVQVLQMKVKRLEHLLQLKNVRIDDLSRRLQQAERKQ</original>
    <variation>RSRSCWPLKRQYRSF</variation>
    <location>
        <begin position="187"/>
        <end position="233"/>
    </location>
</feature>
<accession>Q99JL1</accession>
<accession>A2ANS9</accession>
<accession>Q543S5</accession>
<accession>Q9D4J8</accession>
<proteinExistence type="evidence at protein level"/>
<comment type="function">
    <text evidence="1 5 6">Microtubule-associated protein that promotes microtubule bundling and stabilizes microtubules against depolymerization in response to cold shock (PubMed:16206169). Microtubule-associated protein involved in the stabilization of microtubules along the axis of migration during radial intercalation. Promotes the establishment and stabilization of an axis of microtubules required for the active migration of cells into the outer epithelium (By similarity). Essential for ciliary central apparatus formation which requires both its microtubule-binding and bundling activities and for ciliary localization of HYDIN and SPAG6 in ependymal cilia (PubMed:30535028). Binds actin in intestinal epithelial cells (IECs), essential for IECs survival and contributes to formation of filopodia and lamellipodia in migrating IECs (By similarity). Regulates planar cell polarity signaling pathway and asymmetric microtubule accumulation in ciliated epithelia (By similarity).</text>
</comment>
<comment type="subunit">
    <text evidence="2 6">Homodimer (PubMed:30535028). Interacts with actin, TJP1, CGN and CDH1 (By similarity).</text>
</comment>
<comment type="subcellular location">
    <subcellularLocation>
        <location evidence="4">Cytoplasm</location>
    </subcellularLocation>
    <subcellularLocation>
        <location evidence="4">Cell projection</location>
        <location evidence="4">Cilium</location>
        <location evidence="4">Flagellum</location>
    </subcellularLocation>
    <subcellularLocation>
        <location evidence="6">Cytoplasm</location>
        <location evidence="6">Cytoskeleton</location>
        <location evidence="6">Cilium axoneme</location>
    </subcellularLocation>
    <subcellularLocation>
        <location evidence="1">Apical cell membrane</location>
    </subcellularLocation>
    <subcellularLocation>
        <location evidence="2">Basolateral cell membrane</location>
    </subcellularLocation>
    <subcellularLocation>
        <location evidence="2">Cytoplasm</location>
        <location evidence="2">Cytoskeleton</location>
        <location evidence="2">Stress fiber</location>
    </subcellularLocation>
    <subcellularLocation>
        <location evidence="2">Cell projection</location>
        <location evidence="2">Microvillus</location>
    </subcellularLocation>
    <subcellularLocation>
        <location evidence="2">Cell projection</location>
        <location evidence="2">Lamellipodium</location>
    </subcellularLocation>
    <subcellularLocation>
        <location evidence="2">Cell projection</location>
        <location evidence="2">Filopodium</location>
    </subcellularLocation>
    <text evidence="2 4 6">Also found at the apical tip of cilia (PubMed:30535028). Present in the tails of developing and epididymal sperm, internal to the fibrous sheath and around the outer dense fibers of the sperm flagellum (PubMed:15979255). Colocalizes with TJP1 and CGN at sites of cell-cell contact in intestinal epithelial cells (By similarity).</text>
</comment>
<comment type="tissue specificity">
    <text evidence="4 5 6">Expressed predominantly in the seminiferous epithelium of adult testis (PubMed:15979255). Expressed in pillar cells of the organ of Corti (at protein level). Expressed in brain, kidney, lung and testis (PubMed:16206169, PubMed:30535028). Highly expressed in the trachea, lung and oviduct (PubMed:30535028).</text>
</comment>
<comment type="developmental stage">
    <text evidence="4">Expression is first detected in the testis at 3 weeks and continues to adulthood.</text>
</comment>
<comment type="domain">
    <text evidence="6">The Calponin-homology domain mediates its binding to microtubules.</text>
</comment>
<comment type="disruption phenotype">
    <text evidence="6">Depletion in ependymal cells by RNAi completely abolishes the central pair microtubules and markedly attenuates ciliary localizations of HYDIN and SPAG6, resulting in rotational beat of the ependymal cilia.</text>
</comment>
<comment type="miscellaneous">
    <text evidence="1">Radial intercalation is a developmentally reiterated form of migration by which cells move in a direction orthogonal to the plane of the tissue from an inner layer to an outer layer.</text>
</comment>
<keyword id="KW-0009">Actin-binding</keyword>
<keyword id="KW-1003">Cell membrane</keyword>
<keyword id="KW-0966">Cell projection</keyword>
<keyword id="KW-0969">Cilium</keyword>
<keyword id="KW-0970">Cilium biogenesis/degradation</keyword>
<keyword id="KW-0963">Cytoplasm</keyword>
<keyword id="KW-0206">Cytoskeleton</keyword>
<keyword id="KW-0282">Flagellum</keyword>
<keyword id="KW-0472">Membrane</keyword>
<keyword id="KW-0493">Microtubule</keyword>
<keyword id="KW-1185">Reference proteome</keyword>
<evidence type="ECO:0000250" key="1">
    <source>
        <dbReference type="UniProtKB" id="Q0IH24"/>
    </source>
</evidence>
<evidence type="ECO:0000250" key="2">
    <source>
        <dbReference type="UniProtKB" id="Q9Y4P9"/>
    </source>
</evidence>
<evidence type="ECO:0000255" key="3">
    <source>
        <dbReference type="PROSITE-ProRule" id="PRU00044"/>
    </source>
</evidence>
<evidence type="ECO:0000269" key="4">
    <source>
    </source>
</evidence>
<evidence type="ECO:0000269" key="5">
    <source>
    </source>
</evidence>
<evidence type="ECO:0000269" key="6">
    <source>
    </source>
</evidence>
<evidence type="ECO:0000303" key="7">
    <source>
    </source>
</evidence>
<evidence type="ECO:0000305" key="8"/>